<gene>
    <name evidence="1" type="primary">eno</name>
    <name type="ordered locus">SGO_1426</name>
</gene>
<reference key="1">
    <citation type="journal article" date="2007" name="J. Bacteriol.">
        <title>Genome-wide transcriptional changes in Streptococcus gordonii in response to competence signaling peptide.</title>
        <authorList>
            <person name="Vickerman M.M."/>
            <person name="Iobst S."/>
            <person name="Jesionowski A.M."/>
            <person name="Gill S.R."/>
        </authorList>
    </citation>
    <scope>NUCLEOTIDE SEQUENCE [LARGE SCALE GENOMIC DNA]</scope>
    <source>
        <strain>Challis / ATCC 35105 / BCRC 15272 / CH1 / DL1 / V288</strain>
    </source>
</reference>
<name>ENO_STRGC</name>
<organism>
    <name type="scientific">Streptococcus gordonii (strain Challis / ATCC 35105 / BCRC 15272 / CH1 / DL1 / V288)</name>
    <dbReference type="NCBI Taxonomy" id="467705"/>
    <lineage>
        <taxon>Bacteria</taxon>
        <taxon>Bacillati</taxon>
        <taxon>Bacillota</taxon>
        <taxon>Bacilli</taxon>
        <taxon>Lactobacillales</taxon>
        <taxon>Streptococcaceae</taxon>
        <taxon>Streptococcus</taxon>
    </lineage>
</organism>
<accession>A8AY46</accession>
<comment type="function">
    <text evidence="1">Catalyzes the reversible conversion of 2-phosphoglycerate (2-PG) into phosphoenolpyruvate (PEP). It is essential for the degradation of carbohydrates via glycolysis.</text>
</comment>
<comment type="catalytic activity">
    <reaction evidence="1">
        <text>(2R)-2-phosphoglycerate = phosphoenolpyruvate + H2O</text>
        <dbReference type="Rhea" id="RHEA:10164"/>
        <dbReference type="ChEBI" id="CHEBI:15377"/>
        <dbReference type="ChEBI" id="CHEBI:58289"/>
        <dbReference type="ChEBI" id="CHEBI:58702"/>
        <dbReference type="EC" id="4.2.1.11"/>
    </reaction>
</comment>
<comment type="cofactor">
    <cofactor evidence="1">
        <name>Mg(2+)</name>
        <dbReference type="ChEBI" id="CHEBI:18420"/>
    </cofactor>
    <text evidence="1">Binds a second Mg(2+) ion via substrate during catalysis.</text>
</comment>
<comment type="pathway">
    <text evidence="1">Carbohydrate degradation; glycolysis; pyruvate from D-glyceraldehyde 3-phosphate: step 4/5.</text>
</comment>
<comment type="subcellular location">
    <subcellularLocation>
        <location evidence="1">Cytoplasm</location>
    </subcellularLocation>
    <subcellularLocation>
        <location evidence="1">Secreted</location>
    </subcellularLocation>
    <subcellularLocation>
        <location evidence="1">Cell surface</location>
    </subcellularLocation>
    <text evidence="1">Fractions of enolase are present in both the cytoplasm and on the cell surface.</text>
</comment>
<comment type="similarity">
    <text evidence="1">Belongs to the enolase family.</text>
</comment>
<dbReference type="EC" id="4.2.1.11" evidence="1"/>
<dbReference type="EMBL" id="CP000725">
    <property type="protein sequence ID" value="ABV10654.1"/>
    <property type="molecule type" value="Genomic_DNA"/>
</dbReference>
<dbReference type="RefSeq" id="WP_012130507.1">
    <property type="nucleotide sequence ID" value="NC_009785.1"/>
</dbReference>
<dbReference type="SMR" id="A8AY46"/>
<dbReference type="STRING" id="467705.SGO_1426"/>
<dbReference type="MoonProt" id="A8AY46"/>
<dbReference type="KEGG" id="sgo:SGO_1426"/>
<dbReference type="eggNOG" id="COG0148">
    <property type="taxonomic scope" value="Bacteria"/>
</dbReference>
<dbReference type="HOGENOM" id="CLU_031223_2_1_9"/>
<dbReference type="UniPathway" id="UPA00109">
    <property type="reaction ID" value="UER00187"/>
</dbReference>
<dbReference type="Proteomes" id="UP000001131">
    <property type="component" value="Chromosome"/>
</dbReference>
<dbReference type="GO" id="GO:0009986">
    <property type="term" value="C:cell surface"/>
    <property type="evidence" value="ECO:0007669"/>
    <property type="project" value="UniProtKB-SubCell"/>
</dbReference>
<dbReference type="GO" id="GO:0005576">
    <property type="term" value="C:extracellular region"/>
    <property type="evidence" value="ECO:0007669"/>
    <property type="project" value="UniProtKB-SubCell"/>
</dbReference>
<dbReference type="GO" id="GO:0009274">
    <property type="term" value="C:peptidoglycan-based cell wall"/>
    <property type="evidence" value="ECO:0007669"/>
    <property type="project" value="UniProtKB-ARBA"/>
</dbReference>
<dbReference type="GO" id="GO:0000015">
    <property type="term" value="C:phosphopyruvate hydratase complex"/>
    <property type="evidence" value="ECO:0007669"/>
    <property type="project" value="InterPro"/>
</dbReference>
<dbReference type="GO" id="GO:0000287">
    <property type="term" value="F:magnesium ion binding"/>
    <property type="evidence" value="ECO:0007669"/>
    <property type="project" value="UniProtKB-UniRule"/>
</dbReference>
<dbReference type="GO" id="GO:0004634">
    <property type="term" value="F:phosphopyruvate hydratase activity"/>
    <property type="evidence" value="ECO:0007669"/>
    <property type="project" value="UniProtKB-UniRule"/>
</dbReference>
<dbReference type="GO" id="GO:0006096">
    <property type="term" value="P:glycolytic process"/>
    <property type="evidence" value="ECO:0007669"/>
    <property type="project" value="UniProtKB-UniRule"/>
</dbReference>
<dbReference type="CDD" id="cd03313">
    <property type="entry name" value="enolase"/>
    <property type="match status" value="1"/>
</dbReference>
<dbReference type="FunFam" id="3.20.20.120:FF:000001">
    <property type="entry name" value="Enolase"/>
    <property type="match status" value="1"/>
</dbReference>
<dbReference type="FunFam" id="3.30.390.10:FF:000001">
    <property type="entry name" value="Enolase"/>
    <property type="match status" value="1"/>
</dbReference>
<dbReference type="Gene3D" id="3.20.20.120">
    <property type="entry name" value="Enolase-like C-terminal domain"/>
    <property type="match status" value="1"/>
</dbReference>
<dbReference type="Gene3D" id="3.30.390.10">
    <property type="entry name" value="Enolase-like, N-terminal domain"/>
    <property type="match status" value="1"/>
</dbReference>
<dbReference type="HAMAP" id="MF_00318">
    <property type="entry name" value="Enolase"/>
    <property type="match status" value="1"/>
</dbReference>
<dbReference type="InterPro" id="IPR000941">
    <property type="entry name" value="Enolase"/>
</dbReference>
<dbReference type="InterPro" id="IPR036849">
    <property type="entry name" value="Enolase-like_C_sf"/>
</dbReference>
<dbReference type="InterPro" id="IPR029017">
    <property type="entry name" value="Enolase-like_N"/>
</dbReference>
<dbReference type="InterPro" id="IPR020810">
    <property type="entry name" value="Enolase_C"/>
</dbReference>
<dbReference type="InterPro" id="IPR020809">
    <property type="entry name" value="Enolase_CS"/>
</dbReference>
<dbReference type="InterPro" id="IPR020811">
    <property type="entry name" value="Enolase_N"/>
</dbReference>
<dbReference type="NCBIfam" id="TIGR01060">
    <property type="entry name" value="eno"/>
    <property type="match status" value="1"/>
</dbReference>
<dbReference type="PANTHER" id="PTHR11902">
    <property type="entry name" value="ENOLASE"/>
    <property type="match status" value="1"/>
</dbReference>
<dbReference type="PANTHER" id="PTHR11902:SF1">
    <property type="entry name" value="ENOLASE"/>
    <property type="match status" value="1"/>
</dbReference>
<dbReference type="Pfam" id="PF00113">
    <property type="entry name" value="Enolase_C"/>
    <property type="match status" value="1"/>
</dbReference>
<dbReference type="Pfam" id="PF03952">
    <property type="entry name" value="Enolase_N"/>
    <property type="match status" value="1"/>
</dbReference>
<dbReference type="PIRSF" id="PIRSF001400">
    <property type="entry name" value="Enolase"/>
    <property type="match status" value="1"/>
</dbReference>
<dbReference type="PRINTS" id="PR00148">
    <property type="entry name" value="ENOLASE"/>
</dbReference>
<dbReference type="SFLD" id="SFLDS00001">
    <property type="entry name" value="Enolase"/>
    <property type="match status" value="1"/>
</dbReference>
<dbReference type="SFLD" id="SFLDF00002">
    <property type="entry name" value="enolase"/>
    <property type="match status" value="1"/>
</dbReference>
<dbReference type="SMART" id="SM01192">
    <property type="entry name" value="Enolase_C"/>
    <property type="match status" value="1"/>
</dbReference>
<dbReference type="SMART" id="SM01193">
    <property type="entry name" value="Enolase_N"/>
    <property type="match status" value="1"/>
</dbReference>
<dbReference type="SUPFAM" id="SSF51604">
    <property type="entry name" value="Enolase C-terminal domain-like"/>
    <property type="match status" value="1"/>
</dbReference>
<dbReference type="SUPFAM" id="SSF54826">
    <property type="entry name" value="Enolase N-terminal domain-like"/>
    <property type="match status" value="1"/>
</dbReference>
<dbReference type="PROSITE" id="PS00164">
    <property type="entry name" value="ENOLASE"/>
    <property type="match status" value="1"/>
</dbReference>
<evidence type="ECO:0000255" key="1">
    <source>
        <dbReference type="HAMAP-Rule" id="MF_00318"/>
    </source>
</evidence>
<feature type="chain" id="PRO_1000079158" description="Enolase">
    <location>
        <begin position="1"/>
        <end position="434"/>
    </location>
</feature>
<feature type="active site" description="Proton donor" evidence="1">
    <location>
        <position position="205"/>
    </location>
</feature>
<feature type="active site" description="Proton acceptor" evidence="1">
    <location>
        <position position="343"/>
    </location>
</feature>
<feature type="binding site" evidence="1">
    <location>
        <position position="163"/>
    </location>
    <ligand>
        <name>(2R)-2-phosphoglycerate</name>
        <dbReference type="ChEBI" id="CHEBI:58289"/>
    </ligand>
</feature>
<feature type="binding site" evidence="1">
    <location>
        <position position="242"/>
    </location>
    <ligand>
        <name>Mg(2+)</name>
        <dbReference type="ChEBI" id="CHEBI:18420"/>
    </ligand>
</feature>
<feature type="binding site" evidence="1">
    <location>
        <position position="291"/>
    </location>
    <ligand>
        <name>Mg(2+)</name>
        <dbReference type="ChEBI" id="CHEBI:18420"/>
    </ligand>
</feature>
<feature type="binding site" evidence="1">
    <location>
        <position position="318"/>
    </location>
    <ligand>
        <name>Mg(2+)</name>
        <dbReference type="ChEBI" id="CHEBI:18420"/>
    </ligand>
</feature>
<feature type="binding site" evidence="1">
    <location>
        <position position="343"/>
    </location>
    <ligand>
        <name>(2R)-2-phosphoglycerate</name>
        <dbReference type="ChEBI" id="CHEBI:58289"/>
    </ligand>
</feature>
<feature type="binding site" evidence="1">
    <location>
        <position position="372"/>
    </location>
    <ligand>
        <name>(2R)-2-phosphoglycerate</name>
        <dbReference type="ChEBI" id="CHEBI:58289"/>
    </ligand>
</feature>
<feature type="binding site" evidence="1">
    <location>
        <position position="373"/>
    </location>
    <ligand>
        <name>(2R)-2-phosphoglycerate</name>
        <dbReference type="ChEBI" id="CHEBI:58289"/>
    </ligand>
</feature>
<feature type="binding site" evidence="1">
    <location>
        <position position="394"/>
    </location>
    <ligand>
        <name>(2R)-2-phosphoglycerate</name>
        <dbReference type="ChEBI" id="CHEBI:58289"/>
    </ligand>
</feature>
<keyword id="KW-0963">Cytoplasm</keyword>
<keyword id="KW-0324">Glycolysis</keyword>
<keyword id="KW-0456">Lyase</keyword>
<keyword id="KW-0460">Magnesium</keyword>
<keyword id="KW-0479">Metal-binding</keyword>
<keyword id="KW-1185">Reference proteome</keyword>
<keyword id="KW-0964">Secreted</keyword>
<proteinExistence type="inferred from homology"/>
<sequence length="434" mass="47062">MSIITDVYAREVLDSRGNPTLEVEVYTESGAFGRGMVPSGASTGEHEAVELRDGDKSRYGGLGTQKAVDNVNNVIAEAIIGYDVRDQQAIDRAMIALDGTPNKGKLGANAILGVSIAVARAAADYLEIPLYSYLGGFNTKVLPTPMMNIINGGSHSDAPIAFQEFMILPVGAPTFKEALRYGAEIFHALKKILKSRGLETAVGDEGGFAPRFEGTEDGVETIIAAIEAAGYVPGKDVFIGFDCASSEFYDKERKVYDYTKFEGEGAAVRTAAEQIDYLEELVNKYPIITIEDGMDENDWDGWKALTERLGKKVQLVGDDFFVTNTDYLSRGIKEGCANSILIKVNQIGTLTETFDAIEMAKEAGYTAVVSHRSGETEDSTIADIAVATNAGQIKTGSLSRTDRIAKYNQLLRIEDQLGEVAQYKGLQAFYNLKK</sequence>
<protein>
    <recommendedName>
        <fullName evidence="1">Enolase</fullName>
        <ecNumber evidence="1">4.2.1.11</ecNumber>
    </recommendedName>
    <alternativeName>
        <fullName evidence="1">2-phospho-D-glycerate hydro-lyase</fullName>
    </alternativeName>
    <alternativeName>
        <fullName evidence="1">2-phosphoglycerate dehydratase</fullName>
    </alternativeName>
</protein>